<evidence type="ECO:0000250" key="1"/>
<evidence type="ECO:0000250" key="2">
    <source>
        <dbReference type="UniProtKB" id="Q3V089"/>
    </source>
</evidence>
<evidence type="ECO:0000255" key="3">
    <source>
        <dbReference type="PROSITE-ProRule" id="PRU00176"/>
    </source>
</evidence>
<evidence type="ECO:0000256" key="4">
    <source>
        <dbReference type="SAM" id="MobiDB-lite"/>
    </source>
</evidence>
<evidence type="ECO:0007744" key="5">
    <source>
    </source>
</evidence>
<gene>
    <name type="primary">Rbm44</name>
</gene>
<comment type="function">
    <text evidence="1">Component of intercellular bridges during meiosis. Intercellular bridges are evolutionarily conserved structures that connect differentiating germ cells. Not required for fertility (By similarity).</text>
</comment>
<comment type="subunit">
    <text evidence="1">Homodimer. Interacts with TEX14 (By similarity).</text>
</comment>
<comment type="subcellular location">
    <subcellularLocation>
        <location evidence="1">Cytoplasm</location>
    </subcellularLocation>
    <text evidence="1">Detected in the intercellular bridges.</text>
</comment>
<accession>D3Z987</accession>
<name>RBM44_RAT</name>
<proteinExistence type="evidence at protein level"/>
<sequence length="1020" mass="113582">MQATAVVETDSDKSYHKNGGHLQNDKLYYPKKENMLFSNGCNRVKLTFPDGEGDSLTTDERTNVKENSSVDKRDLSELSFSETQDTNVENLFSQSSEFEDNIEYAFLNETYSIHYSESKLKDENILHLYSELDPEVHERVEVFFDTFGPQGNNDIGLGRSCEALGSACGDMQKSDVREDSQQEYHSAELECLSAHLAVDPAKTVSRSSLDVSEWRTSSYTFKCGGNLEVNRGKLESGPIPFLESLNGFSPKCSPQVSTSPSSDMLKEYHEPKYEKYKEQEVGLTYHKTFDDILQRSSSPLNSQKVPEPLVYAKEMKSQTIEGKDFYGDRIFQNRALQHPENAMFPQDHALETPLKALDAHQLSGPYVLDDSVISLCGSLQYNSLPEPGFYSPVMPRVAVTDSQAEVAGSCLHHVQGSATNKTCSLMKEMCLKSGPDAANCVALGQQTLDVSGRANVSSSVVSTASTTETKTVRRSQPEEWQRDRQSVACNTDWSCGQQCRSARAAALGSDSGRPLSTDCLNCGNSMDENSLELRKTPDKQRHPERAFQLCEEMALPSKCCEKTTERAVKAETHLLDVCYQMCHHHCHHIYKLVMGSRAGLSRNLPTDSAQKELGTALLSVLEDLKARYMNLKGKVHKGIPLEELPPLSVESKLLSAFSDFASRLMKEEACSLSGANSELDNQSLPEVAISPSLLKTLSQMSSISDSSHPKQDKLPMNNIFKNCDINIDFNHLKLNDKESKNVHEASEDWFDATERLTGTDFSVTQENITESEDWDPKNPLESELKTIERLRRGKGFLIHVGGLCPSVSEADLRSHFQKYQVSEISIYDSNTNYRYASLACAKNSNAKMAVKEMNGVEINGKSVNVRLVKIPGEYIPPLLSTAGNNISMNHLERNSSKDATSAASTCRLPIARSGQLESEQDSEFLPLVQGVRENCNQVKSGQSLPETPFQFIPPHTLNLRSFTKIMKRLAELHPEISRDHIIEALQEVRINHKGFLNGLSINTIVKMTSSFLRNAASRLK</sequence>
<feature type="chain" id="PRO_0000417524" description="RNA-binding protein 44">
    <location>
        <begin position="1"/>
        <end position="1020"/>
    </location>
</feature>
<feature type="domain" description="RRM" evidence="3">
    <location>
        <begin position="796"/>
        <end position="870"/>
    </location>
</feature>
<feature type="region of interest" description="Disordered" evidence="4">
    <location>
        <begin position="1"/>
        <end position="23"/>
    </location>
</feature>
<feature type="region of interest" description="Disordered" evidence="4">
    <location>
        <begin position="50"/>
        <end position="70"/>
    </location>
</feature>
<feature type="compositionally biased region" description="Basic and acidic residues" evidence="4">
    <location>
        <begin position="58"/>
        <end position="70"/>
    </location>
</feature>
<feature type="modified residue" description="Phosphoserine" evidence="5">
    <location>
        <position position="249"/>
    </location>
</feature>
<feature type="modified residue" description="Phosphoserine" evidence="2">
    <location>
        <position position="371"/>
    </location>
</feature>
<feature type="modified residue" description="Phosphoserine" evidence="2">
    <location>
        <position position="374"/>
    </location>
</feature>
<feature type="modified residue" description="Phosphoserine" evidence="2">
    <location>
        <position position="516"/>
    </location>
</feature>
<feature type="modified residue" description="Phosphoserine" evidence="2">
    <location>
        <position position="683"/>
    </location>
</feature>
<feature type="modified residue" description="Phosphoserine" evidence="2">
    <location>
        <position position="690"/>
    </location>
</feature>
<keyword id="KW-0963">Cytoplasm</keyword>
<keyword id="KW-0597">Phosphoprotein</keyword>
<keyword id="KW-1185">Reference proteome</keyword>
<keyword id="KW-0694">RNA-binding</keyword>
<protein>
    <recommendedName>
        <fullName>RNA-binding protein 44</fullName>
    </recommendedName>
    <alternativeName>
        <fullName>RNA-binding motif protein 44</fullName>
    </alternativeName>
</protein>
<reference key="1">
    <citation type="journal article" date="2004" name="Nature">
        <title>Genome sequence of the Brown Norway rat yields insights into mammalian evolution.</title>
        <authorList>
            <person name="Gibbs R.A."/>
            <person name="Weinstock G.M."/>
            <person name="Metzker M.L."/>
            <person name="Muzny D.M."/>
            <person name="Sodergren E.J."/>
            <person name="Scherer S."/>
            <person name="Scott G."/>
            <person name="Steffen D."/>
            <person name="Worley K.C."/>
            <person name="Burch P.E."/>
            <person name="Okwuonu G."/>
            <person name="Hines S."/>
            <person name="Lewis L."/>
            <person name="Deramo C."/>
            <person name="Delgado O."/>
            <person name="Dugan-Rocha S."/>
            <person name="Miner G."/>
            <person name="Morgan M."/>
            <person name="Hawes A."/>
            <person name="Gill R."/>
            <person name="Holt R.A."/>
            <person name="Adams M.D."/>
            <person name="Amanatides P.G."/>
            <person name="Baden-Tillson H."/>
            <person name="Barnstead M."/>
            <person name="Chin S."/>
            <person name="Evans C.A."/>
            <person name="Ferriera S."/>
            <person name="Fosler C."/>
            <person name="Glodek A."/>
            <person name="Gu Z."/>
            <person name="Jennings D."/>
            <person name="Kraft C.L."/>
            <person name="Nguyen T."/>
            <person name="Pfannkoch C.M."/>
            <person name="Sitter C."/>
            <person name="Sutton G.G."/>
            <person name="Venter J.C."/>
            <person name="Woodage T."/>
            <person name="Smith D."/>
            <person name="Lee H.-M."/>
            <person name="Gustafson E."/>
            <person name="Cahill P."/>
            <person name="Kana A."/>
            <person name="Doucette-Stamm L."/>
            <person name="Weinstock K."/>
            <person name="Fechtel K."/>
            <person name="Weiss R.B."/>
            <person name="Dunn D.M."/>
            <person name="Green E.D."/>
            <person name="Blakesley R.W."/>
            <person name="Bouffard G.G."/>
            <person name="De Jong P.J."/>
            <person name="Osoegawa K."/>
            <person name="Zhu B."/>
            <person name="Marra M."/>
            <person name="Schein J."/>
            <person name="Bosdet I."/>
            <person name="Fjell C."/>
            <person name="Jones S."/>
            <person name="Krzywinski M."/>
            <person name="Mathewson C."/>
            <person name="Siddiqui A."/>
            <person name="Wye N."/>
            <person name="McPherson J."/>
            <person name="Zhao S."/>
            <person name="Fraser C.M."/>
            <person name="Shetty J."/>
            <person name="Shatsman S."/>
            <person name="Geer K."/>
            <person name="Chen Y."/>
            <person name="Abramzon S."/>
            <person name="Nierman W.C."/>
            <person name="Havlak P.H."/>
            <person name="Chen R."/>
            <person name="Durbin K.J."/>
            <person name="Egan A."/>
            <person name="Ren Y."/>
            <person name="Song X.-Z."/>
            <person name="Li B."/>
            <person name="Liu Y."/>
            <person name="Qin X."/>
            <person name="Cawley S."/>
            <person name="Cooney A.J."/>
            <person name="D'Souza L.M."/>
            <person name="Martin K."/>
            <person name="Wu J.Q."/>
            <person name="Gonzalez-Garay M.L."/>
            <person name="Jackson A.R."/>
            <person name="Kalafus K.J."/>
            <person name="McLeod M.P."/>
            <person name="Milosavljevic A."/>
            <person name="Virk D."/>
            <person name="Volkov A."/>
            <person name="Wheeler D.A."/>
            <person name="Zhang Z."/>
            <person name="Bailey J.A."/>
            <person name="Eichler E.E."/>
            <person name="Tuzun E."/>
            <person name="Birney E."/>
            <person name="Mongin E."/>
            <person name="Ureta-Vidal A."/>
            <person name="Woodwark C."/>
            <person name="Zdobnov E."/>
            <person name="Bork P."/>
            <person name="Suyama M."/>
            <person name="Torrents D."/>
            <person name="Alexandersson M."/>
            <person name="Trask B.J."/>
            <person name="Young J.M."/>
            <person name="Huang H."/>
            <person name="Wang H."/>
            <person name="Xing H."/>
            <person name="Daniels S."/>
            <person name="Gietzen D."/>
            <person name="Schmidt J."/>
            <person name="Stevens K."/>
            <person name="Vitt U."/>
            <person name="Wingrove J."/>
            <person name="Camara F."/>
            <person name="Mar Alba M."/>
            <person name="Abril J.F."/>
            <person name="Guigo R."/>
            <person name="Smit A."/>
            <person name="Dubchak I."/>
            <person name="Rubin E.M."/>
            <person name="Couronne O."/>
            <person name="Poliakov A."/>
            <person name="Huebner N."/>
            <person name="Ganten D."/>
            <person name="Goesele C."/>
            <person name="Hummel O."/>
            <person name="Kreitler T."/>
            <person name="Lee Y.-A."/>
            <person name="Monti J."/>
            <person name="Schulz H."/>
            <person name="Zimdahl H."/>
            <person name="Himmelbauer H."/>
            <person name="Lehrach H."/>
            <person name="Jacob H.J."/>
            <person name="Bromberg S."/>
            <person name="Gullings-Handley J."/>
            <person name="Jensen-Seaman M.I."/>
            <person name="Kwitek A.E."/>
            <person name="Lazar J."/>
            <person name="Pasko D."/>
            <person name="Tonellato P.J."/>
            <person name="Twigger S."/>
            <person name="Ponting C.P."/>
            <person name="Duarte J.M."/>
            <person name="Rice S."/>
            <person name="Goodstadt L."/>
            <person name="Beatson S.A."/>
            <person name="Emes R.D."/>
            <person name="Winter E.E."/>
            <person name="Webber C."/>
            <person name="Brandt P."/>
            <person name="Nyakatura G."/>
            <person name="Adetobi M."/>
            <person name="Chiaromonte F."/>
            <person name="Elnitski L."/>
            <person name="Eswara P."/>
            <person name="Hardison R.C."/>
            <person name="Hou M."/>
            <person name="Kolbe D."/>
            <person name="Makova K."/>
            <person name="Miller W."/>
            <person name="Nekrutenko A."/>
            <person name="Riemer C."/>
            <person name="Schwartz S."/>
            <person name="Taylor J."/>
            <person name="Yang S."/>
            <person name="Zhang Y."/>
            <person name="Lindpaintner K."/>
            <person name="Andrews T.D."/>
            <person name="Caccamo M."/>
            <person name="Clamp M."/>
            <person name="Clarke L."/>
            <person name="Curwen V."/>
            <person name="Durbin R.M."/>
            <person name="Eyras E."/>
            <person name="Searle S.M."/>
            <person name="Cooper G.M."/>
            <person name="Batzoglou S."/>
            <person name="Brudno M."/>
            <person name="Sidow A."/>
            <person name="Stone E.A."/>
            <person name="Payseur B.A."/>
            <person name="Bourque G."/>
            <person name="Lopez-Otin C."/>
            <person name="Puente X.S."/>
            <person name="Chakrabarti K."/>
            <person name="Chatterji S."/>
            <person name="Dewey C."/>
            <person name="Pachter L."/>
            <person name="Bray N."/>
            <person name="Yap V.B."/>
            <person name="Caspi A."/>
            <person name="Tesler G."/>
            <person name="Pevzner P.A."/>
            <person name="Haussler D."/>
            <person name="Roskin K.M."/>
            <person name="Baertsch R."/>
            <person name="Clawson H."/>
            <person name="Furey T.S."/>
            <person name="Hinrichs A.S."/>
            <person name="Karolchik D."/>
            <person name="Kent W.J."/>
            <person name="Rosenbloom K.R."/>
            <person name="Trumbower H."/>
            <person name="Weirauch M."/>
            <person name="Cooper D.N."/>
            <person name="Stenson P.D."/>
            <person name="Ma B."/>
            <person name="Brent M."/>
            <person name="Arumugam M."/>
            <person name="Shteynberg D."/>
            <person name="Copley R.R."/>
            <person name="Taylor M.S."/>
            <person name="Riethman H."/>
            <person name="Mudunuri U."/>
            <person name="Peterson J."/>
            <person name="Guyer M."/>
            <person name="Felsenfeld A."/>
            <person name="Old S."/>
            <person name="Mockrin S."/>
            <person name="Collins F.S."/>
        </authorList>
    </citation>
    <scope>NUCLEOTIDE SEQUENCE [LARGE SCALE GENOMIC DNA]</scope>
    <source>
        <strain>Brown Norway</strain>
    </source>
</reference>
<reference key="2">
    <citation type="journal article" date="2012" name="Nat. Commun.">
        <title>Quantitative maps of protein phosphorylation sites across 14 different rat organs and tissues.</title>
        <authorList>
            <person name="Lundby A."/>
            <person name="Secher A."/>
            <person name="Lage K."/>
            <person name="Nordsborg N.B."/>
            <person name="Dmytriyev A."/>
            <person name="Lundby C."/>
            <person name="Olsen J.V."/>
        </authorList>
    </citation>
    <scope>PHOSPHORYLATION [LARGE SCALE ANALYSIS] AT SER-249</scope>
    <scope>IDENTIFICATION BY MASS SPECTROMETRY [LARGE SCALE ANALYSIS]</scope>
</reference>
<dbReference type="SMR" id="D3Z987"/>
<dbReference type="FunCoup" id="D3Z987">
    <property type="interactions" value="306"/>
</dbReference>
<dbReference type="STRING" id="10116.ENSRNOP00000034920"/>
<dbReference type="iPTMnet" id="D3Z987"/>
<dbReference type="PhosphoSitePlus" id="D3Z987"/>
<dbReference type="PaxDb" id="10116-ENSRNOP00000034920"/>
<dbReference type="UCSC" id="RGD:1566074">
    <property type="organism name" value="rat"/>
</dbReference>
<dbReference type="AGR" id="RGD:1566074"/>
<dbReference type="RGD" id="1566074">
    <property type="gene designation" value="Rbm44"/>
</dbReference>
<dbReference type="eggNOG" id="ENOG502S2NU">
    <property type="taxonomic scope" value="Eukaryota"/>
</dbReference>
<dbReference type="InParanoid" id="D3Z987"/>
<dbReference type="OrthoDB" id="9941526at2759"/>
<dbReference type="PhylomeDB" id="D3Z987"/>
<dbReference type="TreeFam" id="TF337508"/>
<dbReference type="PRO" id="PR:D3Z987"/>
<dbReference type="Proteomes" id="UP000002494">
    <property type="component" value="Unplaced"/>
</dbReference>
<dbReference type="GO" id="GO:0071013">
    <property type="term" value="C:catalytic step 2 spliceosome"/>
    <property type="evidence" value="ECO:0000318"/>
    <property type="project" value="GO_Central"/>
</dbReference>
<dbReference type="GO" id="GO:0005737">
    <property type="term" value="C:cytoplasm"/>
    <property type="evidence" value="ECO:0000250"/>
    <property type="project" value="UniProtKB"/>
</dbReference>
<dbReference type="GO" id="GO:0045171">
    <property type="term" value="C:intercellular bridge"/>
    <property type="evidence" value="ECO:0000250"/>
    <property type="project" value="UniProtKB"/>
</dbReference>
<dbReference type="GO" id="GO:0042803">
    <property type="term" value="F:protein homodimerization activity"/>
    <property type="evidence" value="ECO:0000250"/>
    <property type="project" value="UniProtKB"/>
</dbReference>
<dbReference type="GO" id="GO:0003723">
    <property type="term" value="F:RNA binding"/>
    <property type="evidence" value="ECO:0007669"/>
    <property type="project" value="UniProtKB-KW"/>
</dbReference>
<dbReference type="GO" id="GO:0000398">
    <property type="term" value="P:mRNA splicing, via spliceosome"/>
    <property type="evidence" value="ECO:0000318"/>
    <property type="project" value="GO_Central"/>
</dbReference>
<dbReference type="Gene3D" id="3.30.70.330">
    <property type="match status" value="1"/>
</dbReference>
<dbReference type="InterPro" id="IPR012677">
    <property type="entry name" value="Nucleotide-bd_a/b_plait_sf"/>
</dbReference>
<dbReference type="InterPro" id="IPR035979">
    <property type="entry name" value="RBD_domain_sf"/>
</dbReference>
<dbReference type="InterPro" id="IPR000504">
    <property type="entry name" value="RRM_dom"/>
</dbReference>
<dbReference type="InterPro" id="IPR056870">
    <property type="entry name" value="TTC3/DZIP3/RBM44-like_helical"/>
</dbReference>
<dbReference type="PANTHER" id="PTHR48026">
    <property type="entry name" value="HOMOLOGOUS TO DROSOPHILA SQD (SQUID) PROTEIN"/>
    <property type="match status" value="1"/>
</dbReference>
<dbReference type="PANTHER" id="PTHR48026:SF8">
    <property type="entry name" value="RNA-BINDING PROTEIN 44"/>
    <property type="match status" value="1"/>
</dbReference>
<dbReference type="Pfam" id="PF00076">
    <property type="entry name" value="RRM_1"/>
    <property type="match status" value="1"/>
</dbReference>
<dbReference type="Pfam" id="PF24905">
    <property type="entry name" value="TTC3_9th"/>
    <property type="match status" value="1"/>
</dbReference>
<dbReference type="SMART" id="SM00360">
    <property type="entry name" value="RRM"/>
    <property type="match status" value="1"/>
</dbReference>
<dbReference type="SUPFAM" id="SSF54928">
    <property type="entry name" value="RNA-binding domain, RBD"/>
    <property type="match status" value="1"/>
</dbReference>
<dbReference type="PROSITE" id="PS50102">
    <property type="entry name" value="RRM"/>
    <property type="match status" value="1"/>
</dbReference>
<organism>
    <name type="scientific">Rattus norvegicus</name>
    <name type="common">Rat</name>
    <dbReference type="NCBI Taxonomy" id="10116"/>
    <lineage>
        <taxon>Eukaryota</taxon>
        <taxon>Metazoa</taxon>
        <taxon>Chordata</taxon>
        <taxon>Craniata</taxon>
        <taxon>Vertebrata</taxon>
        <taxon>Euteleostomi</taxon>
        <taxon>Mammalia</taxon>
        <taxon>Eutheria</taxon>
        <taxon>Euarchontoglires</taxon>
        <taxon>Glires</taxon>
        <taxon>Rodentia</taxon>
        <taxon>Myomorpha</taxon>
        <taxon>Muroidea</taxon>
        <taxon>Muridae</taxon>
        <taxon>Murinae</taxon>
        <taxon>Rattus</taxon>
    </lineage>
</organism>